<organism>
    <name type="scientific">Mus musculus</name>
    <name type="common">Mouse</name>
    <dbReference type="NCBI Taxonomy" id="10090"/>
    <lineage>
        <taxon>Eukaryota</taxon>
        <taxon>Metazoa</taxon>
        <taxon>Chordata</taxon>
        <taxon>Craniata</taxon>
        <taxon>Vertebrata</taxon>
        <taxon>Euteleostomi</taxon>
        <taxon>Mammalia</taxon>
        <taxon>Eutheria</taxon>
        <taxon>Euarchontoglires</taxon>
        <taxon>Glires</taxon>
        <taxon>Rodentia</taxon>
        <taxon>Myomorpha</taxon>
        <taxon>Muroidea</taxon>
        <taxon>Muridae</taxon>
        <taxon>Murinae</taxon>
        <taxon>Mus</taxon>
        <taxon>Mus</taxon>
    </lineage>
</organism>
<proteinExistence type="evidence at protein level"/>
<evidence type="ECO:0000255" key="1"/>
<evidence type="ECO:0000256" key="2">
    <source>
        <dbReference type="SAM" id="MobiDB-lite"/>
    </source>
</evidence>
<evidence type="ECO:0000269" key="3">
    <source>
    </source>
</evidence>
<evidence type="ECO:0000305" key="4"/>
<feature type="chain" id="PRO_0000057815" description="Gap junction alpha-4 protein">
    <location>
        <begin position="1"/>
        <end position="333"/>
    </location>
</feature>
<feature type="topological domain" description="Cytoplasmic" evidence="1">
    <location>
        <begin position="1"/>
        <end position="20"/>
    </location>
</feature>
<feature type="transmembrane region" description="Helical" evidence="1">
    <location>
        <begin position="21"/>
        <end position="40"/>
    </location>
</feature>
<feature type="topological domain" description="Extracellular" evidence="1">
    <location>
        <begin position="41"/>
        <end position="76"/>
    </location>
</feature>
<feature type="transmembrane region" description="Helical" evidence="1">
    <location>
        <begin position="77"/>
        <end position="99"/>
    </location>
</feature>
<feature type="topological domain" description="Cytoplasmic" evidence="1">
    <location>
        <begin position="100"/>
        <end position="148"/>
    </location>
</feature>
<feature type="transmembrane region" description="Helical" evidence="1">
    <location>
        <begin position="149"/>
        <end position="171"/>
    </location>
</feature>
<feature type="topological domain" description="Extracellular" evidence="1">
    <location>
        <begin position="172"/>
        <end position="208"/>
    </location>
</feature>
<feature type="transmembrane region" description="Helical" evidence="1">
    <location>
        <begin position="209"/>
        <end position="231"/>
    </location>
</feature>
<feature type="topological domain" description="Cytoplasmic" evidence="1">
    <location>
        <begin position="232"/>
        <end position="333"/>
    </location>
</feature>
<feature type="region of interest" description="Disordered" evidence="2">
    <location>
        <begin position="292"/>
        <end position="333"/>
    </location>
</feature>
<feature type="compositionally biased region" description="Polar residues" evidence="2">
    <location>
        <begin position="321"/>
        <end position="333"/>
    </location>
</feature>
<feature type="sequence variant" description="Requires 2 nucleotide substitutions." evidence="3">
    <original>C</original>
    <variation>Q</variation>
    <location>
        <position position="54"/>
    </location>
</feature>
<feature type="sequence variant" evidence="3">
    <original>P</original>
    <variation>A</variation>
    <location>
        <position position="59"/>
    </location>
</feature>
<sequence>MGDWGFLEKLLDQVQEHSTVVGKIWLTVLFIFRILILGLAGESVWGDEQSDFECNTAQPGCTNVCYDQAFPISHIRYWVLQFLFVSTPTLIYLGHVIYLSRREERLRQKEGELRALPSKDLHVERALAAIEHQMAKISVAEDGRLRIRGALMGTYVVSVLCKSVLEAGFLYGQWRLYGWTMEPVFVCQRAPCPHIVDCYVSRPTEKTIFIIFMLVVGVISLVLNLLELVHLLCRCVSREIKARRDHDARPAQGSASDPYPEQVFFYLPMGEGPSSPPCPTYNGLSSTEQNWANLTTEERLTSSRPPPFVNTAPQGGRKSPSRPNSSASKKQYV</sequence>
<comment type="function">
    <text>One gap junction consists of a cluster of closely packed pairs of transmembrane channels, the connexons, through which materials of low MW diffuse from one cell to a neighboring cell.</text>
</comment>
<comment type="subunit">
    <text>A connexon is composed of a hexamer of connexins.</text>
</comment>
<comment type="subcellular location">
    <subcellularLocation>
        <location>Cell membrane</location>
        <topology>Multi-pass membrane protein</topology>
    </subcellularLocation>
    <subcellularLocation>
        <location>Cell junction</location>
        <location>Gap junction</location>
    </subcellularLocation>
</comment>
<comment type="tissue specificity">
    <text>Highly expressed in lung.</text>
</comment>
<comment type="similarity">
    <text evidence="4">Belongs to the connexin family. Alpha-type (group II) subfamily.</text>
</comment>
<name>CXA4_MOUSE</name>
<dbReference type="EMBL" id="X57971">
    <property type="protein sequence ID" value="CAA41037.1"/>
    <property type="molecule type" value="Genomic_DNA"/>
</dbReference>
<dbReference type="EMBL" id="AF216832">
    <property type="protein sequence ID" value="AAF91221.1"/>
    <property type="molecule type" value="mRNA"/>
</dbReference>
<dbReference type="CCDS" id="CCDS18667.1"/>
<dbReference type="PIR" id="A40548">
    <property type="entry name" value="A40548"/>
</dbReference>
<dbReference type="RefSeq" id="NP_032146.1">
    <property type="nucleotide sequence ID" value="NM_008120.3"/>
</dbReference>
<dbReference type="SMR" id="P28235"/>
<dbReference type="FunCoup" id="P28235">
    <property type="interactions" value="18"/>
</dbReference>
<dbReference type="STRING" id="10090.ENSMUSP00000062320"/>
<dbReference type="iPTMnet" id="P28235"/>
<dbReference type="PhosphoSitePlus" id="P28235"/>
<dbReference type="PaxDb" id="10090-ENSMUSP00000062320"/>
<dbReference type="ProteomicsDB" id="285406"/>
<dbReference type="Antibodypedia" id="4590">
    <property type="antibodies" value="302 antibodies from 31 providers"/>
</dbReference>
<dbReference type="DNASU" id="14612"/>
<dbReference type="Ensembl" id="ENSMUST00000053753.8">
    <property type="protein sequence ID" value="ENSMUSP00000062320.8"/>
    <property type="gene ID" value="ENSMUSG00000050234.8"/>
</dbReference>
<dbReference type="GeneID" id="14612"/>
<dbReference type="KEGG" id="mmu:14612"/>
<dbReference type="UCSC" id="uc008uur.2">
    <property type="organism name" value="mouse"/>
</dbReference>
<dbReference type="AGR" id="MGI:95715"/>
<dbReference type="CTD" id="2701"/>
<dbReference type="MGI" id="MGI:95715">
    <property type="gene designation" value="Gja4"/>
</dbReference>
<dbReference type="VEuPathDB" id="HostDB:ENSMUSG00000050234"/>
<dbReference type="eggNOG" id="ENOG502QU20">
    <property type="taxonomic scope" value="Eukaryota"/>
</dbReference>
<dbReference type="GeneTree" id="ENSGT01090000260070"/>
<dbReference type="HOGENOM" id="CLU_037388_4_2_1"/>
<dbReference type="InParanoid" id="P28235"/>
<dbReference type="OMA" id="MWTYIIS"/>
<dbReference type="OrthoDB" id="9993956at2759"/>
<dbReference type="PhylomeDB" id="P28235"/>
<dbReference type="TreeFam" id="TF329606"/>
<dbReference type="Reactome" id="R-MMU-190861">
    <property type="pathway name" value="Gap junction assembly"/>
</dbReference>
<dbReference type="BioGRID-ORCS" id="14612">
    <property type="hits" value="4 hits in 77 CRISPR screens"/>
</dbReference>
<dbReference type="ChiTaRS" id="Gja4">
    <property type="organism name" value="mouse"/>
</dbReference>
<dbReference type="PRO" id="PR:P28235"/>
<dbReference type="Proteomes" id="UP000000589">
    <property type="component" value="Chromosome 4"/>
</dbReference>
<dbReference type="RNAct" id="P28235">
    <property type="molecule type" value="protein"/>
</dbReference>
<dbReference type="Bgee" id="ENSMUSG00000050234">
    <property type="expression patterns" value="Expressed in primary oocyte and 158 other cell types or tissues"/>
</dbReference>
<dbReference type="ExpressionAtlas" id="P28235">
    <property type="expression patterns" value="baseline and differential"/>
</dbReference>
<dbReference type="GO" id="GO:0005922">
    <property type="term" value="C:connexin complex"/>
    <property type="evidence" value="ECO:0007669"/>
    <property type="project" value="InterPro"/>
</dbReference>
<dbReference type="GO" id="GO:0001568">
    <property type="term" value="P:blood vessel development"/>
    <property type="evidence" value="ECO:0000315"/>
    <property type="project" value="MGI"/>
</dbReference>
<dbReference type="GO" id="GO:0007154">
    <property type="term" value="P:cell communication"/>
    <property type="evidence" value="ECO:0007669"/>
    <property type="project" value="InterPro"/>
</dbReference>
<dbReference type="DisProt" id="DP01175"/>
<dbReference type="FunFam" id="1.20.1440.80:FF:000001">
    <property type="entry name" value="Gap junction alpha-1"/>
    <property type="match status" value="1"/>
</dbReference>
<dbReference type="Gene3D" id="1.20.1440.80">
    <property type="entry name" value="Gap junction channel protein cysteine-rich domain"/>
    <property type="match status" value="1"/>
</dbReference>
<dbReference type="InterPro" id="IPR000500">
    <property type="entry name" value="Connexin"/>
</dbReference>
<dbReference type="InterPro" id="IPR002263">
    <property type="entry name" value="Connexin37"/>
</dbReference>
<dbReference type="InterPro" id="IPR019570">
    <property type="entry name" value="Connexin_CCC"/>
</dbReference>
<dbReference type="InterPro" id="IPR017990">
    <property type="entry name" value="Connexin_CS"/>
</dbReference>
<dbReference type="InterPro" id="IPR013092">
    <property type="entry name" value="Connexin_N"/>
</dbReference>
<dbReference type="InterPro" id="IPR038359">
    <property type="entry name" value="Connexin_N_sf"/>
</dbReference>
<dbReference type="PANTHER" id="PTHR11984">
    <property type="entry name" value="CONNEXIN"/>
    <property type="match status" value="1"/>
</dbReference>
<dbReference type="PANTHER" id="PTHR11984:SF54">
    <property type="entry name" value="GAP JUNCTION ALPHA-4 PROTEIN"/>
    <property type="match status" value="1"/>
</dbReference>
<dbReference type="Pfam" id="PF00029">
    <property type="entry name" value="Connexin"/>
    <property type="match status" value="1"/>
</dbReference>
<dbReference type="PRINTS" id="PR00206">
    <property type="entry name" value="CONNEXIN"/>
</dbReference>
<dbReference type="PRINTS" id="PR01134">
    <property type="entry name" value="CONNEXINA4"/>
</dbReference>
<dbReference type="SMART" id="SM00037">
    <property type="entry name" value="CNX"/>
    <property type="match status" value="1"/>
</dbReference>
<dbReference type="SMART" id="SM01089">
    <property type="entry name" value="Connexin_CCC"/>
    <property type="match status" value="1"/>
</dbReference>
<dbReference type="PROSITE" id="PS00407">
    <property type="entry name" value="CONNEXINS_1"/>
    <property type="match status" value="1"/>
</dbReference>
<dbReference type="PROSITE" id="PS00408">
    <property type="entry name" value="CONNEXINS_2"/>
    <property type="match status" value="1"/>
</dbReference>
<accession>P28235</accession>
<protein>
    <recommendedName>
        <fullName>Gap junction alpha-4 protein</fullName>
    </recommendedName>
    <alternativeName>
        <fullName>Connexin-37</fullName>
        <shortName>Cx37</shortName>
    </alternativeName>
</protein>
<reference key="1">
    <citation type="journal article" date="1991" name="J. Cell Biol.">
        <title>Mouse connexin37: cloning and functional expression of a gap junction gene highly expressed in lung.</title>
        <authorList>
            <person name="Willecke K."/>
            <person name="Heynkes R."/>
            <person name="Dahl E."/>
            <person name="Stutenkemper R."/>
            <person name="Hennemann H."/>
            <person name="Jungbluth S."/>
            <person name="Suchyna T."/>
            <person name="Nicholson B.J."/>
        </authorList>
    </citation>
    <scope>NUCLEOTIDE SEQUENCE [GENOMIC DNA]</scope>
    <source>
        <strain>C57BL/6J</strain>
    </source>
</reference>
<reference key="2">
    <citation type="journal article" date="2000" name="Biochim. Biophys. Acta">
        <title>Mouse connexin37: gene structure and promoter analysis.</title>
        <authorList>
            <person name="Seul K.H."/>
            <person name="Beyer E.C."/>
        </authorList>
    </citation>
    <scope>NUCLEOTIDE SEQUENCE [MRNA]</scope>
    <source>
        <strain>129/SvJ</strain>
        <tissue>Lung</tissue>
    </source>
</reference>
<reference key="3">
    <citation type="journal article" date="1994" name="Nature">
        <title>CTL induction by a tumour-associated antigen octapeptide derived from a murine lung carcinoma.</title>
        <authorList>
            <person name="Mandelboim O."/>
            <person name="Berke G."/>
            <person name="Fridkin M."/>
            <person name="Feldman M."/>
            <person name="Eisenstein M."/>
            <person name="Eisenbach L."/>
        </authorList>
    </citation>
    <scope>PROTEIN SEQUENCE OF 52-59</scope>
    <scope>VARIANTS GLN-54 AND ALA-59</scope>
    <source>
        <tissue>Lung tumor</tissue>
    </source>
</reference>
<keyword id="KW-0965">Cell junction</keyword>
<keyword id="KW-1003">Cell membrane</keyword>
<keyword id="KW-0903">Direct protein sequencing</keyword>
<keyword id="KW-0303">Gap junction</keyword>
<keyword id="KW-0472">Membrane</keyword>
<keyword id="KW-1185">Reference proteome</keyword>
<keyword id="KW-0812">Transmembrane</keyword>
<keyword id="KW-1133">Transmembrane helix</keyword>
<gene>
    <name type="primary">Gja4</name>
    <name type="synonym">Cxn-37</name>
</gene>